<evidence type="ECO:0000250" key="1">
    <source>
        <dbReference type="UniProtKB" id="Q92643"/>
    </source>
</evidence>
<evidence type="ECO:0000255" key="2"/>
<evidence type="ECO:0000269" key="3">
    <source>
    </source>
</evidence>
<evidence type="ECO:0000269" key="4">
    <source>
    </source>
</evidence>
<evidence type="ECO:0000269" key="5">
    <source>
    </source>
</evidence>
<evidence type="ECO:0000305" key="6"/>
<evidence type="ECO:0000312" key="7">
    <source>
        <dbReference type="EMBL" id="AAF45703.2"/>
    </source>
</evidence>
<evidence type="ECO:0000312" key="8">
    <source>
        <dbReference type="EMBL" id="AAL89972.1"/>
    </source>
</evidence>
<evidence type="ECO:0000312" key="9">
    <source>
        <dbReference type="EMBL" id="CAA15687.1"/>
    </source>
</evidence>
<evidence type="ECO:0000312" key="10">
    <source>
        <dbReference type="FlyBase" id="FBgn0023545"/>
    </source>
</evidence>
<proteinExistence type="evidence at transcript level"/>
<feature type="signal peptide" evidence="2">
    <location>
        <begin position="1"/>
        <end position="24"/>
    </location>
</feature>
<feature type="chain" id="PRO_0000043371" description="Putative GPI-anchor transamidase" evidence="2">
    <location>
        <begin position="25"/>
        <end position="355"/>
    </location>
</feature>
<feature type="active site" evidence="1">
    <location>
        <position position="165"/>
    </location>
</feature>
<feature type="active site" evidence="1">
    <location>
        <position position="207"/>
    </location>
</feature>
<gene>
    <name evidence="10" type="primary">PIG-K</name>
    <name evidence="10" type="ORF">CG4406</name>
</gene>
<dbReference type="EC" id="3.-.-.-"/>
<dbReference type="EMBL" id="AE014298">
    <property type="protein sequence ID" value="AAF45703.2"/>
    <property type="molecule type" value="Genomic_DNA"/>
</dbReference>
<dbReference type="EMBL" id="AL009192">
    <property type="protein sequence ID" value="CAA15687.1"/>
    <property type="status" value="ALT_SEQ"/>
    <property type="molecule type" value="Genomic_DNA"/>
</dbReference>
<dbReference type="EMBL" id="AY089234">
    <property type="protein sequence ID" value="AAL89972.1"/>
    <property type="molecule type" value="mRNA"/>
</dbReference>
<dbReference type="PIR" id="T13411">
    <property type="entry name" value="T13411"/>
</dbReference>
<dbReference type="RefSeq" id="NP_569968.2">
    <property type="nucleotide sequence ID" value="NM_130612.4"/>
</dbReference>
<dbReference type="SMR" id="Q8T4E1"/>
<dbReference type="BioGRID" id="57708">
    <property type="interactions" value="1"/>
</dbReference>
<dbReference type="ComplexPortal" id="CPX-2687">
    <property type="entry name" value="GPI-anchor transamidase complex"/>
</dbReference>
<dbReference type="FunCoup" id="Q8T4E1">
    <property type="interactions" value="1373"/>
</dbReference>
<dbReference type="IntAct" id="Q8T4E1">
    <property type="interactions" value="2"/>
</dbReference>
<dbReference type="STRING" id="7227.FBpp0070333"/>
<dbReference type="MEROPS" id="C13.005"/>
<dbReference type="PaxDb" id="7227-FBpp0070333"/>
<dbReference type="DNASU" id="31163"/>
<dbReference type="EnsemblMetazoa" id="FBtr0070347">
    <property type="protein sequence ID" value="FBpp0070333"/>
    <property type="gene ID" value="FBgn0023545"/>
</dbReference>
<dbReference type="GeneID" id="31163"/>
<dbReference type="KEGG" id="dme:Dmel_CG4406"/>
<dbReference type="UCSC" id="CG4406-RA">
    <property type="organism name" value="d. melanogaster"/>
</dbReference>
<dbReference type="AGR" id="FB:FBgn0023545"/>
<dbReference type="CTD" id="31163"/>
<dbReference type="FlyBase" id="FBgn0023545">
    <property type="gene designation" value="PIG-K"/>
</dbReference>
<dbReference type="VEuPathDB" id="VectorBase:FBgn0023545"/>
<dbReference type="eggNOG" id="KOG1349">
    <property type="taxonomic scope" value="Eukaryota"/>
</dbReference>
<dbReference type="GeneTree" id="ENSGT00940000156273"/>
<dbReference type="HOGENOM" id="CLU_044656_1_0_1"/>
<dbReference type="InParanoid" id="Q8T4E1"/>
<dbReference type="OMA" id="VMESQFP"/>
<dbReference type="OrthoDB" id="192611at2759"/>
<dbReference type="PhylomeDB" id="Q8T4E1"/>
<dbReference type="UniPathway" id="UPA00196"/>
<dbReference type="BioGRID-ORCS" id="31163">
    <property type="hits" value="0 hits in 1 CRISPR screen"/>
</dbReference>
<dbReference type="GenomeRNAi" id="31163"/>
<dbReference type="PRO" id="PR:Q8T4E1"/>
<dbReference type="Proteomes" id="UP000000803">
    <property type="component" value="Chromosome X"/>
</dbReference>
<dbReference type="Bgee" id="FBgn0023545">
    <property type="expression patterns" value="Expressed in adult middle midgut class II enteroendocrine cell in adult midgut (Drosophila) and 108 other cell types or tissues"/>
</dbReference>
<dbReference type="GO" id="GO:0005783">
    <property type="term" value="C:endoplasmic reticulum"/>
    <property type="evidence" value="ECO:0000314"/>
    <property type="project" value="FlyBase"/>
</dbReference>
<dbReference type="GO" id="GO:0042765">
    <property type="term" value="C:GPI-anchor transamidase complex"/>
    <property type="evidence" value="ECO:0000314"/>
    <property type="project" value="FlyBase"/>
</dbReference>
<dbReference type="GO" id="GO:0003923">
    <property type="term" value="F:GPI-anchor transamidase activity"/>
    <property type="evidence" value="ECO:0000250"/>
    <property type="project" value="UniProtKB"/>
</dbReference>
<dbReference type="GO" id="GO:0016255">
    <property type="term" value="P:attachment of GPI anchor to protein"/>
    <property type="evidence" value="ECO:0000318"/>
    <property type="project" value="GO_Central"/>
</dbReference>
<dbReference type="GO" id="GO:0006506">
    <property type="term" value="P:GPI anchor biosynthetic process"/>
    <property type="evidence" value="ECO:0007669"/>
    <property type="project" value="UniProtKB-UniPathway"/>
</dbReference>
<dbReference type="GO" id="GO:0006508">
    <property type="term" value="P:proteolysis"/>
    <property type="evidence" value="ECO:0007669"/>
    <property type="project" value="UniProtKB-KW"/>
</dbReference>
<dbReference type="FunFam" id="3.40.50.1460:FF:000002">
    <property type="entry name" value="GPI-anchor transamidase"/>
    <property type="match status" value="1"/>
</dbReference>
<dbReference type="Gene3D" id="3.40.50.1460">
    <property type="match status" value="1"/>
</dbReference>
<dbReference type="InterPro" id="IPR028361">
    <property type="entry name" value="GPI_transamidase"/>
</dbReference>
<dbReference type="InterPro" id="IPR001096">
    <property type="entry name" value="Peptidase_C13"/>
</dbReference>
<dbReference type="PANTHER" id="PTHR48067">
    <property type="entry name" value="GPI-ANCHOR TRANSAMIDASE"/>
    <property type="match status" value="1"/>
</dbReference>
<dbReference type="PANTHER" id="PTHR48067:SF1">
    <property type="entry name" value="GPI-ANCHOR TRANSAMIDASE"/>
    <property type="match status" value="1"/>
</dbReference>
<dbReference type="Pfam" id="PF01650">
    <property type="entry name" value="Peptidase_C13"/>
    <property type="match status" value="1"/>
</dbReference>
<dbReference type="PIRSF" id="PIRSF500138">
    <property type="entry name" value="GPI8"/>
    <property type="match status" value="1"/>
</dbReference>
<dbReference type="PIRSF" id="PIRSF019663">
    <property type="entry name" value="Legumain"/>
    <property type="match status" value="1"/>
</dbReference>
<dbReference type="PRINTS" id="PR00776">
    <property type="entry name" value="HEMOGLOBNASE"/>
</dbReference>
<keyword id="KW-0337">GPI-anchor biosynthesis</keyword>
<keyword id="KW-0378">Hydrolase</keyword>
<keyword id="KW-0645">Protease</keyword>
<keyword id="KW-1185">Reference proteome</keyword>
<keyword id="KW-0732">Signal</keyword>
<keyword id="KW-0788">Thiol protease</keyword>
<accession>Q8T4E1</accession>
<accession>O46047</accession>
<accession>Q9W538</accession>
<protein>
    <recommendedName>
        <fullName>Putative GPI-anchor transamidase</fullName>
        <shortName>GPI transamidase</shortName>
        <ecNumber>3.-.-.-</ecNumber>
    </recommendedName>
    <alternativeName>
        <fullName evidence="10">Phosphatidylinositol glycan anchor biosynthesis protein class K</fullName>
    </alternativeName>
</protein>
<reference evidence="7" key="1">
    <citation type="journal article" date="2000" name="Science">
        <title>The genome sequence of Drosophila melanogaster.</title>
        <authorList>
            <person name="Adams M.D."/>
            <person name="Celniker S.E."/>
            <person name="Holt R.A."/>
            <person name="Evans C.A."/>
            <person name="Gocayne J.D."/>
            <person name="Amanatides P.G."/>
            <person name="Scherer S.E."/>
            <person name="Li P.W."/>
            <person name="Hoskins R.A."/>
            <person name="Galle R.F."/>
            <person name="George R.A."/>
            <person name="Lewis S.E."/>
            <person name="Richards S."/>
            <person name="Ashburner M."/>
            <person name="Henderson S.N."/>
            <person name="Sutton G.G."/>
            <person name="Wortman J.R."/>
            <person name="Yandell M.D."/>
            <person name="Zhang Q."/>
            <person name="Chen L.X."/>
            <person name="Brandon R.C."/>
            <person name="Rogers Y.-H.C."/>
            <person name="Blazej R.G."/>
            <person name="Champe M."/>
            <person name="Pfeiffer B.D."/>
            <person name="Wan K.H."/>
            <person name="Doyle C."/>
            <person name="Baxter E.G."/>
            <person name="Helt G."/>
            <person name="Nelson C.R."/>
            <person name="Miklos G.L.G."/>
            <person name="Abril J.F."/>
            <person name="Agbayani A."/>
            <person name="An H.-J."/>
            <person name="Andrews-Pfannkoch C."/>
            <person name="Baldwin D."/>
            <person name="Ballew R.M."/>
            <person name="Basu A."/>
            <person name="Baxendale J."/>
            <person name="Bayraktaroglu L."/>
            <person name="Beasley E.M."/>
            <person name="Beeson K.Y."/>
            <person name="Benos P.V."/>
            <person name="Berman B.P."/>
            <person name="Bhandari D."/>
            <person name="Bolshakov S."/>
            <person name="Borkova D."/>
            <person name="Botchan M.R."/>
            <person name="Bouck J."/>
            <person name="Brokstein P."/>
            <person name="Brottier P."/>
            <person name="Burtis K.C."/>
            <person name="Busam D.A."/>
            <person name="Butler H."/>
            <person name="Cadieu E."/>
            <person name="Center A."/>
            <person name="Chandra I."/>
            <person name="Cherry J.M."/>
            <person name="Cawley S."/>
            <person name="Dahlke C."/>
            <person name="Davenport L.B."/>
            <person name="Davies P."/>
            <person name="de Pablos B."/>
            <person name="Delcher A."/>
            <person name="Deng Z."/>
            <person name="Mays A.D."/>
            <person name="Dew I."/>
            <person name="Dietz S.M."/>
            <person name="Dodson K."/>
            <person name="Doup L.E."/>
            <person name="Downes M."/>
            <person name="Dugan-Rocha S."/>
            <person name="Dunkov B.C."/>
            <person name="Dunn P."/>
            <person name="Durbin K.J."/>
            <person name="Evangelista C.C."/>
            <person name="Ferraz C."/>
            <person name="Ferriera S."/>
            <person name="Fleischmann W."/>
            <person name="Fosler C."/>
            <person name="Gabrielian A.E."/>
            <person name="Garg N.S."/>
            <person name="Gelbart W.M."/>
            <person name="Glasser K."/>
            <person name="Glodek A."/>
            <person name="Gong F."/>
            <person name="Gorrell J.H."/>
            <person name="Gu Z."/>
            <person name="Guan P."/>
            <person name="Harris M."/>
            <person name="Harris N.L."/>
            <person name="Harvey D.A."/>
            <person name="Heiman T.J."/>
            <person name="Hernandez J.R."/>
            <person name="Houck J."/>
            <person name="Hostin D."/>
            <person name="Houston K.A."/>
            <person name="Howland T.J."/>
            <person name="Wei M.-H."/>
            <person name="Ibegwam C."/>
            <person name="Jalali M."/>
            <person name="Kalush F."/>
            <person name="Karpen G.H."/>
            <person name="Ke Z."/>
            <person name="Kennison J.A."/>
            <person name="Ketchum K.A."/>
            <person name="Kimmel B.E."/>
            <person name="Kodira C.D."/>
            <person name="Kraft C.L."/>
            <person name="Kravitz S."/>
            <person name="Kulp D."/>
            <person name="Lai Z."/>
            <person name="Lasko P."/>
            <person name="Lei Y."/>
            <person name="Levitsky A.A."/>
            <person name="Li J.H."/>
            <person name="Li Z."/>
            <person name="Liang Y."/>
            <person name="Lin X."/>
            <person name="Liu X."/>
            <person name="Mattei B."/>
            <person name="McIntosh T.C."/>
            <person name="McLeod M.P."/>
            <person name="McPherson D."/>
            <person name="Merkulov G."/>
            <person name="Milshina N.V."/>
            <person name="Mobarry C."/>
            <person name="Morris J."/>
            <person name="Moshrefi A."/>
            <person name="Mount S.M."/>
            <person name="Moy M."/>
            <person name="Murphy B."/>
            <person name="Murphy L."/>
            <person name="Muzny D.M."/>
            <person name="Nelson D.L."/>
            <person name="Nelson D.R."/>
            <person name="Nelson K.A."/>
            <person name="Nixon K."/>
            <person name="Nusskern D.R."/>
            <person name="Pacleb J.M."/>
            <person name="Palazzolo M."/>
            <person name="Pittman G.S."/>
            <person name="Pan S."/>
            <person name="Pollard J."/>
            <person name="Puri V."/>
            <person name="Reese M.G."/>
            <person name="Reinert K."/>
            <person name="Remington K."/>
            <person name="Saunders R.D.C."/>
            <person name="Scheeler F."/>
            <person name="Shen H."/>
            <person name="Shue B.C."/>
            <person name="Siden-Kiamos I."/>
            <person name="Simpson M."/>
            <person name="Skupski M.P."/>
            <person name="Smith T.J."/>
            <person name="Spier E."/>
            <person name="Spradling A.C."/>
            <person name="Stapleton M."/>
            <person name="Strong R."/>
            <person name="Sun E."/>
            <person name="Svirskas R."/>
            <person name="Tector C."/>
            <person name="Turner R."/>
            <person name="Venter E."/>
            <person name="Wang A.H."/>
            <person name="Wang X."/>
            <person name="Wang Z.-Y."/>
            <person name="Wassarman D.A."/>
            <person name="Weinstock G.M."/>
            <person name="Weissenbach J."/>
            <person name="Williams S.M."/>
            <person name="Woodage T."/>
            <person name="Worley K.C."/>
            <person name="Wu D."/>
            <person name="Yang S."/>
            <person name="Yao Q.A."/>
            <person name="Ye J."/>
            <person name="Yeh R.-F."/>
            <person name="Zaveri J.S."/>
            <person name="Zhan M."/>
            <person name="Zhang G."/>
            <person name="Zhao Q."/>
            <person name="Zheng L."/>
            <person name="Zheng X.H."/>
            <person name="Zhong F.N."/>
            <person name="Zhong W."/>
            <person name="Zhou X."/>
            <person name="Zhu S.C."/>
            <person name="Zhu X."/>
            <person name="Smith H.O."/>
            <person name="Gibbs R.A."/>
            <person name="Myers E.W."/>
            <person name="Rubin G.M."/>
            <person name="Venter J.C."/>
        </authorList>
    </citation>
    <scope>NUCLEOTIDE SEQUENCE [LARGE SCALE GENOMIC DNA]</scope>
    <source>
        <strain evidence="3">Berkeley</strain>
    </source>
</reference>
<reference evidence="6 7" key="2">
    <citation type="journal article" date="2002" name="Genome Biol.">
        <title>Annotation of the Drosophila melanogaster euchromatic genome: a systematic review.</title>
        <authorList>
            <person name="Misra S."/>
            <person name="Crosby M.A."/>
            <person name="Mungall C.J."/>
            <person name="Matthews B.B."/>
            <person name="Campbell K.S."/>
            <person name="Hradecky P."/>
            <person name="Huang Y."/>
            <person name="Kaminker J.S."/>
            <person name="Millburn G.H."/>
            <person name="Prochnik S.E."/>
            <person name="Smith C.D."/>
            <person name="Tupy J.L."/>
            <person name="Whitfield E.J."/>
            <person name="Bayraktaroglu L."/>
            <person name="Berman B.P."/>
            <person name="Bettencourt B.R."/>
            <person name="Celniker S.E."/>
            <person name="de Grey A.D.N.J."/>
            <person name="Drysdale R.A."/>
            <person name="Harris N.L."/>
            <person name="Richter J."/>
            <person name="Russo S."/>
            <person name="Schroeder A.J."/>
            <person name="Shu S.Q."/>
            <person name="Stapleton M."/>
            <person name="Yamada C."/>
            <person name="Ashburner M."/>
            <person name="Gelbart W.M."/>
            <person name="Rubin G.M."/>
            <person name="Lewis S.E."/>
        </authorList>
    </citation>
    <scope>GENOME REANNOTATION</scope>
    <source>
        <strain>Berkeley</strain>
    </source>
</reference>
<reference evidence="6 9" key="3">
    <citation type="journal article" date="2000" name="Science">
        <title>From sequence to chromosome: the tip of the X chromosome of D. melanogaster.</title>
        <authorList>
            <person name="Benos P.V."/>
            <person name="Gatt M.K."/>
            <person name="Ashburner M."/>
            <person name="Murphy L."/>
            <person name="Harris D."/>
            <person name="Barrell B.G."/>
            <person name="Ferraz C."/>
            <person name="Vidal S."/>
            <person name="Brun C."/>
            <person name="Demailles J."/>
            <person name="Cadieu E."/>
            <person name="Dreano S."/>
            <person name="Gloux S."/>
            <person name="Lelaure V."/>
            <person name="Mottier S."/>
            <person name="Galibert F."/>
            <person name="Borkova D."/>
            <person name="Minana B."/>
            <person name="Kafatos F.C."/>
            <person name="Louis C."/>
            <person name="Siden-Kiamos I."/>
            <person name="Bolshakov S."/>
            <person name="Papagiannakis G."/>
            <person name="Spanos L."/>
            <person name="Cox S."/>
            <person name="Madueno E."/>
            <person name="de Pablos B."/>
            <person name="Modolell J."/>
            <person name="Peter A."/>
            <person name="Schoettler P."/>
            <person name="Werner M."/>
            <person name="Mourkioti F."/>
            <person name="Beinert N."/>
            <person name="Dowe G."/>
            <person name="Schaefer U."/>
            <person name="Jaeckle H."/>
            <person name="Bucheton A."/>
            <person name="Callister D.M."/>
            <person name="Campbell L.A."/>
            <person name="Darlamitsou A."/>
            <person name="Henderson N.S."/>
            <person name="McMillan P.J."/>
            <person name="Salles C."/>
            <person name="Tait E.A."/>
            <person name="Valenti P."/>
            <person name="Saunders R.D.C."/>
            <person name="Glover D.M."/>
        </authorList>
    </citation>
    <scope>NUCLEOTIDE SEQUENCE [LARGE SCALE GENOMIC DNA]</scope>
    <source>
        <strain evidence="4">Oregon-R</strain>
    </source>
</reference>
<reference evidence="6 8" key="4">
    <citation type="journal article" date="2002" name="Genome Biol.">
        <title>A Drosophila full-length cDNA resource.</title>
        <authorList>
            <person name="Stapleton M."/>
            <person name="Carlson J.W."/>
            <person name="Brokstein P."/>
            <person name="Yu C."/>
            <person name="Champe M."/>
            <person name="George R.A."/>
            <person name="Guarin H."/>
            <person name="Kronmiller B."/>
            <person name="Pacleb J.M."/>
            <person name="Park S."/>
            <person name="Wan K.H."/>
            <person name="Rubin G.M."/>
            <person name="Celniker S.E."/>
        </authorList>
    </citation>
    <scope>NUCLEOTIDE SEQUENCE [LARGE SCALE MRNA]</scope>
    <source>
        <strain evidence="5">Berkeley</strain>
        <tissue evidence="5">Testis</tissue>
    </source>
</reference>
<organism>
    <name type="scientific">Drosophila melanogaster</name>
    <name type="common">Fruit fly</name>
    <dbReference type="NCBI Taxonomy" id="7227"/>
    <lineage>
        <taxon>Eukaryota</taxon>
        <taxon>Metazoa</taxon>
        <taxon>Ecdysozoa</taxon>
        <taxon>Arthropoda</taxon>
        <taxon>Hexapoda</taxon>
        <taxon>Insecta</taxon>
        <taxon>Pterygota</taxon>
        <taxon>Neoptera</taxon>
        <taxon>Endopterygota</taxon>
        <taxon>Diptera</taxon>
        <taxon>Brachycera</taxon>
        <taxon>Muscomorpha</taxon>
        <taxon>Ephydroidea</taxon>
        <taxon>Drosophilidae</taxon>
        <taxon>Drosophila</taxon>
        <taxon>Sophophora</taxon>
    </lineage>
</organism>
<name>GPI8_DROME</name>
<sequence length="355" mass="40368">MFNIMLVKFVVIFALILASCRVEADNTSVLPEGFVDAAQRSTHTNNWAVLVDASRFWFNYRHVANVLSIYRSVKRLGIPDSQIILMIADDMACNARNPRPGQVYNNANQHINVYGDDVEVDYRGYEVTVENFVRLLTGRTQNGTARSKKLLSDAGSNVLIYLTGHGGDGFLKFQDSEEITSQELADGIQQMWEKKRYNELFFMVDTCQAASLYEKFTSPNVLAVASSLVGEDSLSHHVDPSIGVYMIDRYTYYALEFLEKVQPFSKRTIGEFLQVCPKRVCISTVGVRKDLYPRDPHKVPITDFFGAIRPTRVSTDRINVTLANEDDFIFDKDKMVTKKPFKIVMESQFPSELFK</sequence>
<comment type="function">
    <text evidence="1">Mediates GPI anchoring in the endoplasmic reticulum, by replacing a protein's C-terminal GPI attachment signal peptide with a pre-assembled GPI. During this transamidation reaction, the GPI transamidase forms a carbonyl intermediate with the substrate protein (By similarity).</text>
</comment>
<comment type="pathway">
    <text>Glycolipid biosynthesis; glycosylphosphatidylinositol-anchor biosynthesis.</text>
</comment>
<comment type="similarity">
    <text evidence="2">Belongs to the peptidase C13 family.</text>
</comment>
<comment type="sequence caution" evidence="6">
    <conflict type="erroneous gene model prediction">
        <sequence resource="EMBL-CDS" id="CAA15687"/>
    </conflict>
</comment>